<proteinExistence type="inferred from homology"/>
<organism>
    <name type="scientific">Carboxydothermus hydrogenoformans (strain ATCC BAA-161 / DSM 6008 / Z-2901)</name>
    <dbReference type="NCBI Taxonomy" id="246194"/>
    <lineage>
        <taxon>Bacteria</taxon>
        <taxon>Bacillati</taxon>
        <taxon>Bacillota</taxon>
        <taxon>Clostridia</taxon>
        <taxon>Thermoanaerobacterales</taxon>
        <taxon>Thermoanaerobacteraceae</taxon>
        <taxon>Carboxydothermus</taxon>
    </lineage>
</organism>
<accession>Q3AB77</accession>
<evidence type="ECO:0000255" key="1">
    <source>
        <dbReference type="HAMAP-Rule" id="MF_00291"/>
    </source>
</evidence>
<evidence type="ECO:0000305" key="2"/>
<comment type="similarity">
    <text evidence="1">Belongs to the universal ribosomal protein uS2 family.</text>
</comment>
<dbReference type="EMBL" id="CP000141">
    <property type="protein sequence ID" value="ABB13786.1"/>
    <property type="molecule type" value="Genomic_DNA"/>
</dbReference>
<dbReference type="RefSeq" id="WP_011344681.1">
    <property type="nucleotide sequence ID" value="NC_007503.1"/>
</dbReference>
<dbReference type="SMR" id="Q3AB77"/>
<dbReference type="FunCoup" id="Q3AB77">
    <property type="interactions" value="450"/>
</dbReference>
<dbReference type="STRING" id="246194.CHY_1787"/>
<dbReference type="KEGG" id="chy:CHY_1787"/>
<dbReference type="eggNOG" id="COG0052">
    <property type="taxonomic scope" value="Bacteria"/>
</dbReference>
<dbReference type="HOGENOM" id="CLU_040318_1_2_9"/>
<dbReference type="InParanoid" id="Q3AB77"/>
<dbReference type="OrthoDB" id="9808036at2"/>
<dbReference type="Proteomes" id="UP000002706">
    <property type="component" value="Chromosome"/>
</dbReference>
<dbReference type="GO" id="GO:0022627">
    <property type="term" value="C:cytosolic small ribosomal subunit"/>
    <property type="evidence" value="ECO:0007669"/>
    <property type="project" value="TreeGrafter"/>
</dbReference>
<dbReference type="GO" id="GO:0003735">
    <property type="term" value="F:structural constituent of ribosome"/>
    <property type="evidence" value="ECO:0007669"/>
    <property type="project" value="InterPro"/>
</dbReference>
<dbReference type="GO" id="GO:0006412">
    <property type="term" value="P:translation"/>
    <property type="evidence" value="ECO:0007669"/>
    <property type="project" value="UniProtKB-UniRule"/>
</dbReference>
<dbReference type="CDD" id="cd01425">
    <property type="entry name" value="RPS2"/>
    <property type="match status" value="1"/>
</dbReference>
<dbReference type="FunFam" id="1.10.287.610:FF:000001">
    <property type="entry name" value="30S ribosomal protein S2"/>
    <property type="match status" value="1"/>
</dbReference>
<dbReference type="Gene3D" id="3.40.50.10490">
    <property type="entry name" value="Glucose-6-phosphate isomerase like protein, domain 1"/>
    <property type="match status" value="1"/>
</dbReference>
<dbReference type="Gene3D" id="1.10.287.610">
    <property type="entry name" value="Helix hairpin bin"/>
    <property type="match status" value="1"/>
</dbReference>
<dbReference type="HAMAP" id="MF_00291_B">
    <property type="entry name" value="Ribosomal_uS2_B"/>
    <property type="match status" value="1"/>
</dbReference>
<dbReference type="InterPro" id="IPR001865">
    <property type="entry name" value="Ribosomal_uS2"/>
</dbReference>
<dbReference type="InterPro" id="IPR005706">
    <property type="entry name" value="Ribosomal_uS2_bac/mit/plastid"/>
</dbReference>
<dbReference type="InterPro" id="IPR018130">
    <property type="entry name" value="Ribosomal_uS2_CS"/>
</dbReference>
<dbReference type="InterPro" id="IPR023591">
    <property type="entry name" value="Ribosomal_uS2_flav_dom_sf"/>
</dbReference>
<dbReference type="NCBIfam" id="TIGR01011">
    <property type="entry name" value="rpsB_bact"/>
    <property type="match status" value="1"/>
</dbReference>
<dbReference type="PANTHER" id="PTHR12534">
    <property type="entry name" value="30S RIBOSOMAL PROTEIN S2 PROKARYOTIC AND ORGANELLAR"/>
    <property type="match status" value="1"/>
</dbReference>
<dbReference type="PANTHER" id="PTHR12534:SF0">
    <property type="entry name" value="SMALL RIBOSOMAL SUBUNIT PROTEIN US2M"/>
    <property type="match status" value="1"/>
</dbReference>
<dbReference type="Pfam" id="PF00318">
    <property type="entry name" value="Ribosomal_S2"/>
    <property type="match status" value="1"/>
</dbReference>
<dbReference type="PRINTS" id="PR00395">
    <property type="entry name" value="RIBOSOMALS2"/>
</dbReference>
<dbReference type="SUPFAM" id="SSF52313">
    <property type="entry name" value="Ribosomal protein S2"/>
    <property type="match status" value="1"/>
</dbReference>
<dbReference type="PROSITE" id="PS00962">
    <property type="entry name" value="RIBOSOMAL_S2_1"/>
    <property type="match status" value="1"/>
</dbReference>
<name>RS2_CARHZ</name>
<keyword id="KW-1185">Reference proteome</keyword>
<keyword id="KW-0687">Ribonucleoprotein</keyword>
<keyword id="KW-0689">Ribosomal protein</keyword>
<feature type="chain" id="PRO_1000003925" description="Small ribosomal subunit protein uS2">
    <location>
        <begin position="1"/>
        <end position="232"/>
    </location>
</feature>
<protein>
    <recommendedName>
        <fullName evidence="1">Small ribosomal subunit protein uS2</fullName>
    </recommendedName>
    <alternativeName>
        <fullName evidence="2">30S ribosomal protein S2</fullName>
    </alternativeName>
</protein>
<gene>
    <name evidence="1" type="primary">rpsB</name>
    <name type="ordered locus">CHY_1787</name>
</gene>
<reference key="1">
    <citation type="journal article" date="2005" name="PLoS Genet.">
        <title>Life in hot carbon monoxide: the complete genome sequence of Carboxydothermus hydrogenoformans Z-2901.</title>
        <authorList>
            <person name="Wu M."/>
            <person name="Ren Q."/>
            <person name="Durkin A.S."/>
            <person name="Daugherty S.C."/>
            <person name="Brinkac L.M."/>
            <person name="Dodson R.J."/>
            <person name="Madupu R."/>
            <person name="Sullivan S.A."/>
            <person name="Kolonay J.F."/>
            <person name="Nelson W.C."/>
            <person name="Tallon L.J."/>
            <person name="Jones K.M."/>
            <person name="Ulrich L.E."/>
            <person name="Gonzalez J.M."/>
            <person name="Zhulin I.B."/>
            <person name="Robb F.T."/>
            <person name="Eisen J.A."/>
        </authorList>
    </citation>
    <scope>NUCLEOTIDE SEQUENCE [LARGE SCALE GENOMIC DNA]</scope>
    <source>
        <strain>ATCC BAA-161 / DSM 6008 / Z-2901</strain>
    </source>
</reference>
<sequence length="232" mass="26314">MAVISMKQLLEAGVHFGHQTRRWNPKMAEYIFTDRNGIYIIDLQKTAKKLEEAYSFVRELSAQGGTILFVGTKKQAQDAIKEEAERCGMFYVNQRWLGGTLTNFKTIRKRVERLIEIEKMEQEGALSVLPKKEVAKILKEKEKLSRFLSGIKEMKKLPDALFVVDPRKEKIAVAEARKLDIPVVAIVDTNCDPDEVDYVIPGNDDAIRAVKLITSKIADAVIEGRQGEQYAE</sequence>